<proteinExistence type="inferred from homology"/>
<feature type="chain" id="PRO_1000055028" description="Small ribosomal subunit protein uS17">
    <location>
        <begin position="1"/>
        <end position="86"/>
    </location>
</feature>
<name>RS17_RHIWR</name>
<reference key="1">
    <citation type="journal article" date="2010" name="J. Bacteriol.">
        <title>Genome sequence of the dioxin-mineralizing bacterium Sphingomonas wittichii RW1.</title>
        <authorList>
            <person name="Miller T.R."/>
            <person name="Delcher A.L."/>
            <person name="Salzberg S.L."/>
            <person name="Saunders E."/>
            <person name="Detter J.C."/>
            <person name="Halden R.U."/>
        </authorList>
    </citation>
    <scope>NUCLEOTIDE SEQUENCE [LARGE SCALE GENOMIC DNA]</scope>
    <source>
        <strain>DSM 6014 / CCUG 31198 / JCM 15750 / NBRC 105917 / EY 4224 / RW1</strain>
    </source>
</reference>
<keyword id="KW-1185">Reference proteome</keyword>
<keyword id="KW-0687">Ribonucleoprotein</keyword>
<keyword id="KW-0689">Ribosomal protein</keyword>
<keyword id="KW-0694">RNA-binding</keyword>
<keyword id="KW-0699">rRNA-binding</keyword>
<evidence type="ECO:0000255" key="1">
    <source>
        <dbReference type="HAMAP-Rule" id="MF_01345"/>
    </source>
</evidence>
<evidence type="ECO:0000305" key="2"/>
<gene>
    <name evidence="1" type="primary">rpsQ</name>
    <name type="ordered locus">Swit_1344</name>
</gene>
<comment type="function">
    <text evidence="1">One of the primary rRNA binding proteins, it binds specifically to the 5'-end of 16S ribosomal RNA.</text>
</comment>
<comment type="subunit">
    <text evidence="1">Part of the 30S ribosomal subunit.</text>
</comment>
<comment type="similarity">
    <text evidence="1">Belongs to the universal ribosomal protein uS17 family.</text>
</comment>
<dbReference type="EMBL" id="CP000699">
    <property type="protein sequence ID" value="ABQ67709.1"/>
    <property type="molecule type" value="Genomic_DNA"/>
</dbReference>
<dbReference type="SMR" id="A5V5Z3"/>
<dbReference type="STRING" id="392499.Swit_1344"/>
<dbReference type="PaxDb" id="392499-Swit_1344"/>
<dbReference type="KEGG" id="swi:Swit_1344"/>
<dbReference type="eggNOG" id="COG0186">
    <property type="taxonomic scope" value="Bacteria"/>
</dbReference>
<dbReference type="HOGENOM" id="CLU_073626_1_1_5"/>
<dbReference type="OrthoDB" id="9811714at2"/>
<dbReference type="Proteomes" id="UP000001989">
    <property type="component" value="Chromosome"/>
</dbReference>
<dbReference type="GO" id="GO:0022627">
    <property type="term" value="C:cytosolic small ribosomal subunit"/>
    <property type="evidence" value="ECO:0007669"/>
    <property type="project" value="TreeGrafter"/>
</dbReference>
<dbReference type="GO" id="GO:0019843">
    <property type="term" value="F:rRNA binding"/>
    <property type="evidence" value="ECO:0007669"/>
    <property type="project" value="UniProtKB-UniRule"/>
</dbReference>
<dbReference type="GO" id="GO:0003735">
    <property type="term" value="F:structural constituent of ribosome"/>
    <property type="evidence" value="ECO:0007669"/>
    <property type="project" value="InterPro"/>
</dbReference>
<dbReference type="GO" id="GO:0006412">
    <property type="term" value="P:translation"/>
    <property type="evidence" value="ECO:0007669"/>
    <property type="project" value="UniProtKB-UniRule"/>
</dbReference>
<dbReference type="CDD" id="cd00364">
    <property type="entry name" value="Ribosomal_uS17"/>
    <property type="match status" value="1"/>
</dbReference>
<dbReference type="Gene3D" id="2.40.50.140">
    <property type="entry name" value="Nucleic acid-binding proteins"/>
    <property type="match status" value="1"/>
</dbReference>
<dbReference type="HAMAP" id="MF_01345_B">
    <property type="entry name" value="Ribosomal_uS17_B"/>
    <property type="match status" value="1"/>
</dbReference>
<dbReference type="InterPro" id="IPR012340">
    <property type="entry name" value="NA-bd_OB-fold"/>
</dbReference>
<dbReference type="InterPro" id="IPR000266">
    <property type="entry name" value="Ribosomal_uS17"/>
</dbReference>
<dbReference type="InterPro" id="IPR019984">
    <property type="entry name" value="Ribosomal_uS17_bact/chlr"/>
</dbReference>
<dbReference type="NCBIfam" id="NF004123">
    <property type="entry name" value="PRK05610.1"/>
    <property type="match status" value="1"/>
</dbReference>
<dbReference type="NCBIfam" id="TIGR03635">
    <property type="entry name" value="uS17_bact"/>
    <property type="match status" value="1"/>
</dbReference>
<dbReference type="PANTHER" id="PTHR10744">
    <property type="entry name" value="40S RIBOSOMAL PROTEIN S11 FAMILY MEMBER"/>
    <property type="match status" value="1"/>
</dbReference>
<dbReference type="PANTHER" id="PTHR10744:SF1">
    <property type="entry name" value="SMALL RIBOSOMAL SUBUNIT PROTEIN US17M"/>
    <property type="match status" value="1"/>
</dbReference>
<dbReference type="Pfam" id="PF00366">
    <property type="entry name" value="Ribosomal_S17"/>
    <property type="match status" value="1"/>
</dbReference>
<dbReference type="PRINTS" id="PR00973">
    <property type="entry name" value="RIBOSOMALS17"/>
</dbReference>
<dbReference type="SUPFAM" id="SSF50249">
    <property type="entry name" value="Nucleic acid-binding proteins"/>
    <property type="match status" value="1"/>
</dbReference>
<protein>
    <recommendedName>
        <fullName evidence="1">Small ribosomal subunit protein uS17</fullName>
    </recommendedName>
    <alternativeName>
        <fullName evidence="2">30S ribosomal protein S17</fullName>
    </alternativeName>
</protein>
<accession>A5V5Z3</accession>
<sequence>MPKRVLTGTVVSDKTDKTVVVKVERRVKHALYGKIIKRSKKYHAHDETNEYREGETVRIEETAPMSKLKTWKVIERVDTHATPNHA</sequence>
<organism>
    <name type="scientific">Rhizorhabdus wittichii (strain DSM 6014 / CCUG 31198 / JCM 15750 / NBRC 105917 / EY 4224 / RW1)</name>
    <name type="common">Sphingomonas wittichii</name>
    <dbReference type="NCBI Taxonomy" id="392499"/>
    <lineage>
        <taxon>Bacteria</taxon>
        <taxon>Pseudomonadati</taxon>
        <taxon>Pseudomonadota</taxon>
        <taxon>Alphaproteobacteria</taxon>
        <taxon>Sphingomonadales</taxon>
        <taxon>Sphingomonadaceae</taxon>
        <taxon>Rhizorhabdus</taxon>
    </lineage>
</organism>